<dbReference type="EC" id="4.2.1.33" evidence="1"/>
<dbReference type="EMBL" id="BA000018">
    <property type="protein sequence ID" value="BAB43147.1"/>
    <property type="molecule type" value="Genomic_DNA"/>
</dbReference>
<dbReference type="PIR" id="B89998">
    <property type="entry name" value="B89998"/>
</dbReference>
<dbReference type="RefSeq" id="WP_000718953.1">
    <property type="nucleotide sequence ID" value="NC_002745.2"/>
</dbReference>
<dbReference type="SMR" id="P65280"/>
<dbReference type="EnsemblBacteria" id="BAB43147">
    <property type="protein sequence ID" value="BAB43147"/>
    <property type="gene ID" value="BAB43147"/>
</dbReference>
<dbReference type="KEGG" id="sau:SA1865"/>
<dbReference type="HOGENOM" id="CLU_081378_0_3_9"/>
<dbReference type="UniPathway" id="UPA00048">
    <property type="reaction ID" value="UER00071"/>
</dbReference>
<dbReference type="GO" id="GO:0009316">
    <property type="term" value="C:3-isopropylmalate dehydratase complex"/>
    <property type="evidence" value="ECO:0007669"/>
    <property type="project" value="InterPro"/>
</dbReference>
<dbReference type="GO" id="GO:0003861">
    <property type="term" value="F:3-isopropylmalate dehydratase activity"/>
    <property type="evidence" value="ECO:0007669"/>
    <property type="project" value="UniProtKB-UniRule"/>
</dbReference>
<dbReference type="GO" id="GO:0009098">
    <property type="term" value="P:L-leucine biosynthetic process"/>
    <property type="evidence" value="ECO:0007669"/>
    <property type="project" value="UniProtKB-UniRule"/>
</dbReference>
<dbReference type="CDD" id="cd01577">
    <property type="entry name" value="IPMI_Swivel"/>
    <property type="match status" value="1"/>
</dbReference>
<dbReference type="FunFam" id="3.20.19.10:FF:000003">
    <property type="entry name" value="3-isopropylmalate dehydratase small subunit"/>
    <property type="match status" value="1"/>
</dbReference>
<dbReference type="Gene3D" id="3.20.19.10">
    <property type="entry name" value="Aconitase, domain 4"/>
    <property type="match status" value="1"/>
</dbReference>
<dbReference type="HAMAP" id="MF_01031">
    <property type="entry name" value="LeuD_type1"/>
    <property type="match status" value="1"/>
</dbReference>
<dbReference type="InterPro" id="IPR004431">
    <property type="entry name" value="3-IsopropMal_deHydase_ssu"/>
</dbReference>
<dbReference type="InterPro" id="IPR015928">
    <property type="entry name" value="Aconitase/3IPM_dehydase_swvl"/>
</dbReference>
<dbReference type="InterPro" id="IPR000573">
    <property type="entry name" value="AconitaseA/IPMdHydase_ssu_swvl"/>
</dbReference>
<dbReference type="InterPro" id="IPR033940">
    <property type="entry name" value="IPMI_Swivel"/>
</dbReference>
<dbReference type="InterPro" id="IPR050075">
    <property type="entry name" value="LeuD"/>
</dbReference>
<dbReference type="NCBIfam" id="TIGR00171">
    <property type="entry name" value="leuD"/>
    <property type="match status" value="1"/>
</dbReference>
<dbReference type="NCBIfam" id="NF002458">
    <property type="entry name" value="PRK01641.1"/>
    <property type="match status" value="1"/>
</dbReference>
<dbReference type="PANTHER" id="PTHR43345:SF5">
    <property type="entry name" value="3-ISOPROPYLMALATE DEHYDRATASE SMALL SUBUNIT"/>
    <property type="match status" value="1"/>
</dbReference>
<dbReference type="PANTHER" id="PTHR43345">
    <property type="entry name" value="3-ISOPROPYLMALATE DEHYDRATASE SMALL SUBUNIT 2-RELATED-RELATED"/>
    <property type="match status" value="1"/>
</dbReference>
<dbReference type="Pfam" id="PF00694">
    <property type="entry name" value="Aconitase_C"/>
    <property type="match status" value="1"/>
</dbReference>
<dbReference type="SUPFAM" id="SSF52016">
    <property type="entry name" value="LeuD/IlvD-like"/>
    <property type="match status" value="1"/>
</dbReference>
<comment type="function">
    <text evidence="1">Catalyzes the isomerization between 2-isopropylmalate and 3-isopropylmalate, via the formation of 2-isopropylmaleate.</text>
</comment>
<comment type="catalytic activity">
    <reaction evidence="1">
        <text>(2R,3S)-3-isopropylmalate = (2S)-2-isopropylmalate</text>
        <dbReference type="Rhea" id="RHEA:32287"/>
        <dbReference type="ChEBI" id="CHEBI:1178"/>
        <dbReference type="ChEBI" id="CHEBI:35121"/>
        <dbReference type="EC" id="4.2.1.33"/>
    </reaction>
</comment>
<comment type="pathway">
    <text evidence="1">Amino-acid biosynthesis; L-leucine biosynthesis; L-leucine from 3-methyl-2-oxobutanoate: step 2/4.</text>
</comment>
<comment type="subunit">
    <text evidence="1">Heterodimer of LeuC and LeuD.</text>
</comment>
<comment type="similarity">
    <text evidence="1">Belongs to the LeuD family. LeuD type 1 subfamily.</text>
</comment>
<evidence type="ECO:0000255" key="1">
    <source>
        <dbReference type="HAMAP-Rule" id="MF_01031"/>
    </source>
</evidence>
<sequence length="190" mass="21623">MAAIKPITTYKGKIVPLFNDNIDTDQIIPKVHLKRISKSGFGPFAFDEWRYLPDGSDNPDFNPNKPQYKGASILITGDNFGCGSSREHAAWALKDYGFHIIIAGSFSDIFYMNCTKNAMLPIVLEKSAREHLAQYEEIEIDLPNQTVSSPDKRFHFEIDETWKNKLVNGLDDIAITLQYESLIEKYEKSL</sequence>
<feature type="chain" id="PRO_0000141888" description="3-isopropylmalate dehydratase small subunit">
    <location>
        <begin position="1"/>
        <end position="190"/>
    </location>
</feature>
<organism>
    <name type="scientific">Staphylococcus aureus (strain N315)</name>
    <dbReference type="NCBI Taxonomy" id="158879"/>
    <lineage>
        <taxon>Bacteria</taxon>
        <taxon>Bacillati</taxon>
        <taxon>Bacillota</taxon>
        <taxon>Bacilli</taxon>
        <taxon>Bacillales</taxon>
        <taxon>Staphylococcaceae</taxon>
        <taxon>Staphylococcus</taxon>
    </lineage>
</organism>
<gene>
    <name evidence="1" type="primary">leuD</name>
    <name type="ordered locus">SA1865</name>
</gene>
<name>LEUD_STAAN</name>
<protein>
    <recommendedName>
        <fullName evidence="1">3-isopropylmalate dehydratase small subunit</fullName>
        <ecNumber evidence="1">4.2.1.33</ecNumber>
    </recommendedName>
    <alternativeName>
        <fullName evidence="1">Alpha-IPM isomerase</fullName>
        <shortName evidence="1">IPMI</shortName>
    </alternativeName>
    <alternativeName>
        <fullName evidence="1">Isopropylmalate isomerase</fullName>
    </alternativeName>
</protein>
<proteinExistence type="inferred from homology"/>
<reference key="1">
    <citation type="journal article" date="2001" name="Lancet">
        <title>Whole genome sequencing of meticillin-resistant Staphylococcus aureus.</title>
        <authorList>
            <person name="Kuroda M."/>
            <person name="Ohta T."/>
            <person name="Uchiyama I."/>
            <person name="Baba T."/>
            <person name="Yuzawa H."/>
            <person name="Kobayashi I."/>
            <person name="Cui L."/>
            <person name="Oguchi A."/>
            <person name="Aoki K."/>
            <person name="Nagai Y."/>
            <person name="Lian J.-Q."/>
            <person name="Ito T."/>
            <person name="Kanamori M."/>
            <person name="Matsumaru H."/>
            <person name="Maruyama A."/>
            <person name="Murakami H."/>
            <person name="Hosoyama A."/>
            <person name="Mizutani-Ui Y."/>
            <person name="Takahashi N.K."/>
            <person name="Sawano T."/>
            <person name="Inoue R."/>
            <person name="Kaito C."/>
            <person name="Sekimizu K."/>
            <person name="Hirakawa H."/>
            <person name="Kuhara S."/>
            <person name="Goto S."/>
            <person name="Yabuzaki J."/>
            <person name="Kanehisa M."/>
            <person name="Yamashita A."/>
            <person name="Oshima K."/>
            <person name="Furuya K."/>
            <person name="Yoshino C."/>
            <person name="Shiba T."/>
            <person name="Hattori M."/>
            <person name="Ogasawara N."/>
            <person name="Hayashi H."/>
            <person name="Hiramatsu K."/>
        </authorList>
    </citation>
    <scope>NUCLEOTIDE SEQUENCE [LARGE SCALE GENOMIC DNA]</scope>
    <source>
        <strain>N315</strain>
    </source>
</reference>
<keyword id="KW-0028">Amino-acid biosynthesis</keyword>
<keyword id="KW-0100">Branched-chain amino acid biosynthesis</keyword>
<keyword id="KW-0432">Leucine biosynthesis</keyword>
<keyword id="KW-0456">Lyase</keyword>
<accession>P65280</accession>
<accession>Q99SJ2</accession>